<name>ARGP_KLEP3</name>
<accession>B5XUC3</accession>
<organism>
    <name type="scientific">Klebsiella pneumoniae (strain 342)</name>
    <dbReference type="NCBI Taxonomy" id="507522"/>
    <lineage>
        <taxon>Bacteria</taxon>
        <taxon>Pseudomonadati</taxon>
        <taxon>Pseudomonadota</taxon>
        <taxon>Gammaproteobacteria</taxon>
        <taxon>Enterobacterales</taxon>
        <taxon>Enterobacteriaceae</taxon>
        <taxon>Klebsiella/Raoultella group</taxon>
        <taxon>Klebsiella</taxon>
        <taxon>Klebsiella pneumoniae complex</taxon>
    </lineage>
</organism>
<comment type="function">
    <text evidence="1">Controls the transcription of genes involved in arginine and lysine metabolism.</text>
</comment>
<comment type="subunit">
    <text evidence="1">Homodimer.</text>
</comment>
<comment type="similarity">
    <text evidence="2">Belongs to the LysR transcriptional regulatory family.</text>
</comment>
<proteinExistence type="inferred from homology"/>
<sequence>MKRPDYRTLQALDAVIRERGFERAAQKLCITQSAVSQRIKQLENMFGQPLLVRTVPPRPTEQGQKLLALLRQVELLEEEWLGDEQTGSTPLLLSLAVNADSLATWLLPALANVLSDSPIRLNLQVEDETRTQERLRRGEVVGAVSIQPQALPSCLVDQLGALDYLFVASKEFAQRYFPNGVTRSALLKAPVVAFDHLDDMHQAFLQQNFDLPPGSVPCHIVNSSEAFVQLARQGTTCCMIPHLQIEKELKSGELIDLTPGLFQRRMLYWHRFAPESRMMRRVTDALIDYGHKVLRQD</sequence>
<keyword id="KW-0238">DNA-binding</keyword>
<keyword id="KW-0804">Transcription</keyword>
<keyword id="KW-0805">Transcription regulation</keyword>
<gene>
    <name evidence="1" type="primary">argP</name>
    <name type="synonym">iciA</name>
    <name type="ordered locus">KPK_0749</name>
</gene>
<protein>
    <recommendedName>
        <fullName evidence="1">HTH-type transcriptional regulator ArgP</fullName>
    </recommendedName>
</protein>
<feature type="chain" id="PRO_1000127276" description="HTH-type transcriptional regulator ArgP">
    <location>
        <begin position="1"/>
        <end position="297"/>
    </location>
</feature>
<feature type="domain" description="HTH lysR-type" evidence="1">
    <location>
        <begin position="4"/>
        <end position="60"/>
    </location>
</feature>
<feature type="DNA-binding region" description="H-T-H motif" evidence="1">
    <location>
        <begin position="21"/>
        <end position="40"/>
    </location>
</feature>
<reference key="1">
    <citation type="journal article" date="2008" name="PLoS Genet.">
        <title>Complete genome sequence of the N2-fixing broad host range endophyte Klebsiella pneumoniae 342 and virulence predictions verified in mice.</title>
        <authorList>
            <person name="Fouts D.E."/>
            <person name="Tyler H.L."/>
            <person name="DeBoy R.T."/>
            <person name="Daugherty S."/>
            <person name="Ren Q."/>
            <person name="Badger J.H."/>
            <person name="Durkin A.S."/>
            <person name="Huot H."/>
            <person name="Shrivastava S."/>
            <person name="Kothari S."/>
            <person name="Dodson R.J."/>
            <person name="Mohamoud Y."/>
            <person name="Khouri H."/>
            <person name="Roesch L.F.W."/>
            <person name="Krogfelt K.A."/>
            <person name="Struve C."/>
            <person name="Triplett E.W."/>
            <person name="Methe B.A."/>
        </authorList>
    </citation>
    <scope>NUCLEOTIDE SEQUENCE [LARGE SCALE GENOMIC DNA]</scope>
    <source>
        <strain>342</strain>
    </source>
</reference>
<dbReference type="EMBL" id="CP000964">
    <property type="protein sequence ID" value="ACI07206.1"/>
    <property type="molecule type" value="Genomic_DNA"/>
</dbReference>
<dbReference type="SMR" id="B5XUC3"/>
<dbReference type="KEGG" id="kpe:KPK_0749"/>
<dbReference type="HOGENOM" id="CLU_063829_0_0_6"/>
<dbReference type="Proteomes" id="UP000001734">
    <property type="component" value="Chromosome"/>
</dbReference>
<dbReference type="GO" id="GO:0003677">
    <property type="term" value="F:DNA binding"/>
    <property type="evidence" value="ECO:0007669"/>
    <property type="project" value="UniProtKB-UniRule"/>
</dbReference>
<dbReference type="GO" id="GO:0003700">
    <property type="term" value="F:DNA-binding transcription factor activity"/>
    <property type="evidence" value="ECO:0007669"/>
    <property type="project" value="UniProtKB-UniRule"/>
</dbReference>
<dbReference type="CDD" id="cd08428">
    <property type="entry name" value="PBP2_IciA_ArgP"/>
    <property type="match status" value="1"/>
</dbReference>
<dbReference type="FunFam" id="1.10.10.10:FF:000061">
    <property type="entry name" value="HTH-type transcriptional regulator ArgP"/>
    <property type="match status" value="1"/>
</dbReference>
<dbReference type="FunFam" id="3.40.190.290:FF:000002">
    <property type="entry name" value="HTH-type transcriptional regulator ArgP"/>
    <property type="match status" value="1"/>
</dbReference>
<dbReference type="Gene3D" id="3.40.190.290">
    <property type="match status" value="1"/>
</dbReference>
<dbReference type="Gene3D" id="1.10.10.10">
    <property type="entry name" value="Winged helix-like DNA-binding domain superfamily/Winged helix DNA-binding domain"/>
    <property type="match status" value="1"/>
</dbReference>
<dbReference type="HAMAP" id="MF_00513">
    <property type="entry name" value="HTH_type_ArgP"/>
    <property type="match status" value="1"/>
</dbReference>
<dbReference type="InterPro" id="IPR017685">
    <property type="entry name" value="ArgP"/>
</dbReference>
<dbReference type="InterPro" id="IPR023490">
    <property type="entry name" value="ArgP_gammaproteobact"/>
</dbReference>
<dbReference type="InterPro" id="IPR050176">
    <property type="entry name" value="LTTR"/>
</dbReference>
<dbReference type="InterPro" id="IPR005119">
    <property type="entry name" value="LysR_subst-bd"/>
</dbReference>
<dbReference type="InterPro" id="IPR000847">
    <property type="entry name" value="Tscrpt_reg_HTH_LysR"/>
</dbReference>
<dbReference type="InterPro" id="IPR036388">
    <property type="entry name" value="WH-like_DNA-bd_sf"/>
</dbReference>
<dbReference type="InterPro" id="IPR036390">
    <property type="entry name" value="WH_DNA-bd_sf"/>
</dbReference>
<dbReference type="NCBIfam" id="TIGR03298">
    <property type="entry name" value="argP"/>
    <property type="match status" value="1"/>
</dbReference>
<dbReference type="NCBIfam" id="NF002964">
    <property type="entry name" value="PRK03635.1"/>
    <property type="match status" value="1"/>
</dbReference>
<dbReference type="NCBIfam" id="NF009888">
    <property type="entry name" value="PRK13348.1"/>
    <property type="match status" value="1"/>
</dbReference>
<dbReference type="PANTHER" id="PTHR30579:SF2">
    <property type="entry name" value="HTH-TYPE TRANSCRIPTIONAL REGULATOR ARGP"/>
    <property type="match status" value="1"/>
</dbReference>
<dbReference type="PANTHER" id="PTHR30579">
    <property type="entry name" value="TRANSCRIPTIONAL REGULATOR"/>
    <property type="match status" value="1"/>
</dbReference>
<dbReference type="Pfam" id="PF00126">
    <property type="entry name" value="HTH_1"/>
    <property type="match status" value="1"/>
</dbReference>
<dbReference type="Pfam" id="PF03466">
    <property type="entry name" value="LysR_substrate"/>
    <property type="match status" value="1"/>
</dbReference>
<dbReference type="PRINTS" id="PR00039">
    <property type="entry name" value="HTHLYSR"/>
</dbReference>
<dbReference type="SUPFAM" id="SSF53850">
    <property type="entry name" value="Periplasmic binding protein-like II"/>
    <property type="match status" value="1"/>
</dbReference>
<dbReference type="SUPFAM" id="SSF46785">
    <property type="entry name" value="Winged helix' DNA-binding domain"/>
    <property type="match status" value="1"/>
</dbReference>
<dbReference type="PROSITE" id="PS50931">
    <property type="entry name" value="HTH_LYSR"/>
    <property type="match status" value="1"/>
</dbReference>
<evidence type="ECO:0000255" key="1">
    <source>
        <dbReference type="HAMAP-Rule" id="MF_00513"/>
    </source>
</evidence>
<evidence type="ECO:0000305" key="2"/>